<keyword id="KW-0963">Cytoplasm</keyword>
<keyword id="KW-0343">GTPase activation</keyword>
<keyword id="KW-1185">Reference proteome</keyword>
<keyword id="KW-0677">Repeat</keyword>
<keyword id="KW-0853">WD repeat</keyword>
<protein>
    <recommendedName>
        <fullName>Rho GTPase-activating protein gacL</fullName>
    </recommendedName>
    <alternativeName>
        <fullName>GTPase activating factor for raC protein L</fullName>
    </alternativeName>
</protein>
<feature type="chain" id="PRO_0000380210" description="Rho GTPase-activating protein gacL">
    <location>
        <begin position="1"/>
        <end position="734"/>
    </location>
</feature>
<feature type="domain" description="Rho-GAP" evidence="2">
    <location>
        <begin position="141"/>
        <end position="339"/>
    </location>
</feature>
<feature type="repeat" description="WD 1">
    <location>
        <begin position="381"/>
        <end position="430"/>
    </location>
</feature>
<feature type="repeat" description="WD 2">
    <location>
        <begin position="539"/>
        <end position="579"/>
    </location>
</feature>
<feature type="repeat" description="WD 3">
    <location>
        <begin position="585"/>
        <end position="623"/>
    </location>
</feature>
<feature type="site" description="Arginine finger; crucial for GTP hydrolysis by stabilizing the transition state" evidence="2">
    <location>
        <position position="180"/>
    </location>
</feature>
<dbReference type="EMBL" id="AAFI02000171">
    <property type="protein sequence ID" value="EAL62010.1"/>
    <property type="molecule type" value="Genomic_DNA"/>
</dbReference>
<dbReference type="RefSeq" id="XP_635517.1">
    <property type="nucleotide sequence ID" value="XM_630425.1"/>
</dbReference>
<dbReference type="SMR" id="Q54FF4"/>
<dbReference type="FunCoup" id="Q54FF4">
    <property type="interactions" value="120"/>
</dbReference>
<dbReference type="PaxDb" id="44689-DDB0233793"/>
<dbReference type="EnsemblProtists" id="EAL62010">
    <property type="protein sequence ID" value="EAL62010"/>
    <property type="gene ID" value="DDB_G0290891"/>
</dbReference>
<dbReference type="GeneID" id="8627884"/>
<dbReference type="KEGG" id="ddi:DDB_G0290891"/>
<dbReference type="dictyBase" id="DDB_G0290891">
    <property type="gene designation" value="gacL"/>
</dbReference>
<dbReference type="VEuPathDB" id="AmoebaDB:DDB_G0290891"/>
<dbReference type="eggNOG" id="KOG4270">
    <property type="taxonomic scope" value="Eukaryota"/>
</dbReference>
<dbReference type="HOGENOM" id="CLU_377876_0_0_1"/>
<dbReference type="InParanoid" id="Q54FF4"/>
<dbReference type="OMA" id="WIGGDEG"/>
<dbReference type="PRO" id="PR:Q54FF4"/>
<dbReference type="Proteomes" id="UP000002195">
    <property type="component" value="Chromosome 5"/>
</dbReference>
<dbReference type="GO" id="GO:0005737">
    <property type="term" value="C:cytoplasm"/>
    <property type="evidence" value="ECO:0000318"/>
    <property type="project" value="GO_Central"/>
</dbReference>
<dbReference type="GO" id="GO:0005096">
    <property type="term" value="F:GTPase activator activity"/>
    <property type="evidence" value="ECO:0000318"/>
    <property type="project" value="GO_Central"/>
</dbReference>
<dbReference type="GO" id="GO:0007264">
    <property type="term" value="P:small GTPase-mediated signal transduction"/>
    <property type="evidence" value="ECO:0000318"/>
    <property type="project" value="GO_Central"/>
</dbReference>
<dbReference type="CDD" id="cd00159">
    <property type="entry name" value="RhoGAP"/>
    <property type="match status" value="1"/>
</dbReference>
<dbReference type="Gene3D" id="1.10.555.10">
    <property type="entry name" value="Rho GTPase activation protein"/>
    <property type="match status" value="1"/>
</dbReference>
<dbReference type="Gene3D" id="2.130.10.10">
    <property type="entry name" value="YVTN repeat-like/Quinoprotein amine dehydrogenase"/>
    <property type="match status" value="1"/>
</dbReference>
<dbReference type="InterPro" id="IPR011047">
    <property type="entry name" value="Quinoprotein_ADH-like_sf"/>
</dbReference>
<dbReference type="InterPro" id="IPR008936">
    <property type="entry name" value="Rho_GTPase_activation_prot"/>
</dbReference>
<dbReference type="InterPro" id="IPR000198">
    <property type="entry name" value="RhoGAP_dom"/>
</dbReference>
<dbReference type="InterPro" id="IPR015943">
    <property type="entry name" value="WD40/YVTN_repeat-like_dom_sf"/>
</dbReference>
<dbReference type="PANTHER" id="PTHR45808">
    <property type="entry name" value="RHO GTPASE-ACTIVATING PROTEIN 68F"/>
    <property type="match status" value="1"/>
</dbReference>
<dbReference type="PANTHER" id="PTHR45808:SF3">
    <property type="entry name" value="RHO GTPASE-ACTIVATING PROTEIN GACL"/>
    <property type="match status" value="1"/>
</dbReference>
<dbReference type="Pfam" id="PF00620">
    <property type="entry name" value="RhoGAP"/>
    <property type="match status" value="1"/>
</dbReference>
<dbReference type="SMART" id="SM00324">
    <property type="entry name" value="RhoGAP"/>
    <property type="match status" value="1"/>
</dbReference>
<dbReference type="SUPFAM" id="SSF48350">
    <property type="entry name" value="GTPase activation domain, GAP"/>
    <property type="match status" value="1"/>
</dbReference>
<dbReference type="SUPFAM" id="SSF50998">
    <property type="entry name" value="Quinoprotein alcohol dehydrogenase-like"/>
    <property type="match status" value="1"/>
</dbReference>
<dbReference type="PROSITE" id="PS50238">
    <property type="entry name" value="RHOGAP"/>
    <property type="match status" value="1"/>
</dbReference>
<reference key="1">
    <citation type="journal article" date="2005" name="Nature">
        <title>The genome of the social amoeba Dictyostelium discoideum.</title>
        <authorList>
            <person name="Eichinger L."/>
            <person name="Pachebat J.A."/>
            <person name="Gloeckner G."/>
            <person name="Rajandream M.A."/>
            <person name="Sucgang R."/>
            <person name="Berriman M."/>
            <person name="Song J."/>
            <person name="Olsen R."/>
            <person name="Szafranski K."/>
            <person name="Xu Q."/>
            <person name="Tunggal B."/>
            <person name="Kummerfeld S."/>
            <person name="Madera M."/>
            <person name="Konfortov B.A."/>
            <person name="Rivero F."/>
            <person name="Bankier A.T."/>
            <person name="Lehmann R."/>
            <person name="Hamlin N."/>
            <person name="Davies R."/>
            <person name="Gaudet P."/>
            <person name="Fey P."/>
            <person name="Pilcher K."/>
            <person name="Chen G."/>
            <person name="Saunders D."/>
            <person name="Sodergren E.J."/>
            <person name="Davis P."/>
            <person name="Kerhornou A."/>
            <person name="Nie X."/>
            <person name="Hall N."/>
            <person name="Anjard C."/>
            <person name="Hemphill L."/>
            <person name="Bason N."/>
            <person name="Farbrother P."/>
            <person name="Desany B."/>
            <person name="Just E."/>
            <person name="Morio T."/>
            <person name="Rost R."/>
            <person name="Churcher C.M."/>
            <person name="Cooper J."/>
            <person name="Haydock S."/>
            <person name="van Driessche N."/>
            <person name="Cronin A."/>
            <person name="Goodhead I."/>
            <person name="Muzny D.M."/>
            <person name="Mourier T."/>
            <person name="Pain A."/>
            <person name="Lu M."/>
            <person name="Harper D."/>
            <person name="Lindsay R."/>
            <person name="Hauser H."/>
            <person name="James K.D."/>
            <person name="Quiles M."/>
            <person name="Madan Babu M."/>
            <person name="Saito T."/>
            <person name="Buchrieser C."/>
            <person name="Wardroper A."/>
            <person name="Felder M."/>
            <person name="Thangavelu M."/>
            <person name="Johnson D."/>
            <person name="Knights A."/>
            <person name="Loulseged H."/>
            <person name="Mungall K.L."/>
            <person name="Oliver K."/>
            <person name="Price C."/>
            <person name="Quail M.A."/>
            <person name="Urushihara H."/>
            <person name="Hernandez J."/>
            <person name="Rabbinowitsch E."/>
            <person name="Steffen D."/>
            <person name="Sanders M."/>
            <person name="Ma J."/>
            <person name="Kohara Y."/>
            <person name="Sharp S."/>
            <person name="Simmonds M.N."/>
            <person name="Spiegler S."/>
            <person name="Tivey A."/>
            <person name="Sugano S."/>
            <person name="White B."/>
            <person name="Walker D."/>
            <person name="Woodward J.R."/>
            <person name="Winckler T."/>
            <person name="Tanaka Y."/>
            <person name="Shaulsky G."/>
            <person name="Schleicher M."/>
            <person name="Weinstock G.M."/>
            <person name="Rosenthal A."/>
            <person name="Cox E.C."/>
            <person name="Chisholm R.L."/>
            <person name="Gibbs R.A."/>
            <person name="Loomis W.F."/>
            <person name="Platzer M."/>
            <person name="Kay R.R."/>
            <person name="Williams J.G."/>
            <person name="Dear P.H."/>
            <person name="Noegel A.A."/>
            <person name="Barrell B.G."/>
            <person name="Kuspa A."/>
        </authorList>
    </citation>
    <scope>NUCLEOTIDE SEQUENCE [LARGE SCALE GENOMIC DNA]</scope>
    <source>
        <strain>AX4</strain>
    </source>
</reference>
<reference key="2">
    <citation type="journal article" date="2008" name="BMC Genomics">
        <title>Genome-wide transcriptional changes induced by phagocytosis or growth on bacteria in Dictyostelium.</title>
        <authorList>
            <person name="Sillo A."/>
            <person name="Bloomfield G."/>
            <person name="Balest A."/>
            <person name="Balbo A."/>
            <person name="Pergolizzi B."/>
            <person name="Peracino B."/>
            <person name="Skelton J."/>
            <person name="Ivens A."/>
            <person name="Bozzaro S."/>
        </authorList>
    </citation>
    <scope>INDUCTION [LARGE SCALE ANALYSIS]</scope>
</reference>
<sequence>MDIELFLSNYNIANGTSSTTANNSKFQPKIKVKLVVESGSSTYEKSLESTNDQLKPLIIKLNNKIKKYEESLNKKNFVTPNKQSSSSMNLLQKSSTVNLSSPSLSQIGLTHHASLKNLQITTSPDIQQPPSVPSNPIVFGISLDTLIAKEKSMELRIPTFVSNILNTLFLHSLGVEGLFRISGSQMEIQNRRGIVNLGDYSTSRDDNPHVLTVLLKQFLRDLPEPICTNALYDLFLAASDQINFQQCKENGFEVLKKLINSNLPVNNRNLLQHLIHFLRFVAMNQTVNLMGPSNLSRVFGPNLFWKKETGPLDIQILQSTSEKVNFITEQMILHYDTLFEEPLQTTSPAVLSNTPINSNPASIPTFNFGGKKLVIHSKLLGHNKSIQWMTLCGSSNSNGNSELSGSRVWSLDSHGMARIWDSQNQQFIKEVEVVDQSKGGGGAVYQMISTTVNNTVWTATSQKLAIWDIDGGLIGEIPGESYSLCESQNKEIWVGGPQVLNIYSLDGIPSIAPSNCTSDDNNSNGAGGGELLKPIGTNLFMKGIIILAMCKVGQNRIWGCSSEKTLYVWDTKTKETIHQCEIQEKRPKRMACIEIDDTEYIWIGGDEGSIQIFNSKTFKLEHKILNQGWDKIFHIASINREIWIGFWDTTVRVFPGDPKNKEILIDYKGYHSDVVSSIIEVPNLKGGDPFVWFGSYDKSISIVSIKEDTAKSWNFTNIKKNFTRPIRQGFSSRG</sequence>
<comment type="function">
    <text evidence="1">Rho GTPase-activating protein involved in the signal transduction pathway.</text>
</comment>
<comment type="subcellular location">
    <subcellularLocation>
        <location evidence="1">Cytoplasm</location>
    </subcellularLocation>
</comment>
<comment type="induction">
    <text evidence="3">Down-regulated by phagocytic stimuli.</text>
</comment>
<accession>Q54FF4</accession>
<name>GACL_DICDI</name>
<gene>
    <name type="primary">gacL</name>
    <name type="ORF">DDB_G0290891</name>
</gene>
<evidence type="ECO:0000250" key="1"/>
<evidence type="ECO:0000255" key="2">
    <source>
        <dbReference type="PROSITE-ProRule" id="PRU00172"/>
    </source>
</evidence>
<evidence type="ECO:0000269" key="3">
    <source>
    </source>
</evidence>
<organism>
    <name type="scientific">Dictyostelium discoideum</name>
    <name type="common">Social amoeba</name>
    <dbReference type="NCBI Taxonomy" id="44689"/>
    <lineage>
        <taxon>Eukaryota</taxon>
        <taxon>Amoebozoa</taxon>
        <taxon>Evosea</taxon>
        <taxon>Eumycetozoa</taxon>
        <taxon>Dictyostelia</taxon>
        <taxon>Dictyosteliales</taxon>
        <taxon>Dictyosteliaceae</taxon>
        <taxon>Dictyostelium</taxon>
    </lineage>
</organism>
<proteinExistence type="evidence at transcript level"/>